<protein>
    <recommendedName>
        <fullName evidence="1">Phosphoenolpyruvate carboxykinase (ATP)</fullName>
        <shortName evidence="1">PCK</shortName>
        <shortName evidence="1">PEP carboxykinase</shortName>
        <shortName evidence="1">PEPCK</shortName>
        <ecNumber evidence="1">4.1.1.49</ecNumber>
    </recommendedName>
</protein>
<feature type="chain" id="PRO_0000203816" description="Phosphoenolpyruvate carboxykinase (ATP)">
    <location>
        <begin position="1"/>
        <end position="517"/>
    </location>
</feature>
<feature type="binding site" evidence="1">
    <location>
        <position position="46"/>
    </location>
    <ligand>
        <name>substrate</name>
    </ligand>
</feature>
<feature type="binding site" evidence="1">
    <location>
        <position position="180"/>
    </location>
    <ligand>
        <name>substrate</name>
    </ligand>
</feature>
<feature type="binding site" evidence="1">
    <location>
        <position position="186"/>
    </location>
    <ligand>
        <name>ATP</name>
        <dbReference type="ChEBI" id="CHEBI:30616"/>
    </ligand>
</feature>
<feature type="binding site" evidence="1">
    <location>
        <position position="186"/>
    </location>
    <ligand>
        <name>Mn(2+)</name>
        <dbReference type="ChEBI" id="CHEBI:29035"/>
    </ligand>
</feature>
<feature type="binding site" evidence="1">
    <location>
        <position position="186"/>
    </location>
    <ligand>
        <name>substrate</name>
    </ligand>
</feature>
<feature type="binding site" evidence="1">
    <location>
        <position position="205"/>
    </location>
    <ligand>
        <name>ATP</name>
        <dbReference type="ChEBI" id="CHEBI:30616"/>
    </ligand>
</feature>
<feature type="binding site" evidence="1">
    <location>
        <position position="205"/>
    </location>
    <ligand>
        <name>Mn(2+)</name>
        <dbReference type="ChEBI" id="CHEBI:29035"/>
    </ligand>
</feature>
<feature type="binding site" evidence="1">
    <location>
        <begin position="221"/>
        <end position="229"/>
    </location>
    <ligand>
        <name>ATP</name>
        <dbReference type="ChEBI" id="CHEBI:30616"/>
    </ligand>
</feature>
<feature type="binding site" evidence="1">
    <location>
        <position position="242"/>
    </location>
    <ligand>
        <name>Mn(2+)</name>
        <dbReference type="ChEBI" id="CHEBI:29035"/>
    </ligand>
</feature>
<feature type="binding site" evidence="1">
    <location>
        <position position="270"/>
    </location>
    <ligand>
        <name>ATP</name>
        <dbReference type="ChEBI" id="CHEBI:30616"/>
    </ligand>
</feature>
<feature type="binding site" evidence="1">
    <location>
        <position position="306"/>
    </location>
    <ligand>
        <name>ATP</name>
        <dbReference type="ChEBI" id="CHEBI:30616"/>
    </ligand>
</feature>
<feature type="binding site" evidence="1">
    <location>
        <position position="306"/>
    </location>
    <ligand>
        <name>substrate</name>
    </ligand>
</feature>
<feature type="binding site" evidence="1">
    <location>
        <position position="433"/>
    </location>
    <ligand>
        <name>ATP</name>
        <dbReference type="ChEBI" id="CHEBI:30616"/>
    </ligand>
</feature>
<gene>
    <name evidence="1" type="primary">pckA</name>
    <name type="ordered locus">CBU_2092</name>
</gene>
<organism>
    <name type="scientific">Coxiella burnetii (strain RSA 493 / Nine Mile phase I)</name>
    <dbReference type="NCBI Taxonomy" id="227377"/>
    <lineage>
        <taxon>Bacteria</taxon>
        <taxon>Pseudomonadati</taxon>
        <taxon>Pseudomonadota</taxon>
        <taxon>Gammaproteobacteria</taxon>
        <taxon>Legionellales</taxon>
        <taxon>Coxiellaceae</taxon>
        <taxon>Coxiella</taxon>
    </lineage>
</organism>
<evidence type="ECO:0000255" key="1">
    <source>
        <dbReference type="HAMAP-Rule" id="MF_00453"/>
    </source>
</evidence>
<keyword id="KW-0067">ATP-binding</keyword>
<keyword id="KW-0963">Cytoplasm</keyword>
<keyword id="KW-0210">Decarboxylase</keyword>
<keyword id="KW-0312">Gluconeogenesis</keyword>
<keyword id="KW-0456">Lyase</keyword>
<keyword id="KW-0464">Manganese</keyword>
<keyword id="KW-0479">Metal-binding</keyword>
<keyword id="KW-0547">Nucleotide-binding</keyword>
<keyword id="KW-1185">Reference proteome</keyword>
<comment type="function">
    <text evidence="1">Involved in the gluconeogenesis. Catalyzes the conversion of oxaloacetate (OAA) to phosphoenolpyruvate (PEP) through direct phosphoryl transfer between the nucleoside triphosphate and OAA.</text>
</comment>
<comment type="catalytic activity">
    <reaction evidence="1">
        <text>oxaloacetate + ATP = phosphoenolpyruvate + ADP + CO2</text>
        <dbReference type="Rhea" id="RHEA:18617"/>
        <dbReference type="ChEBI" id="CHEBI:16452"/>
        <dbReference type="ChEBI" id="CHEBI:16526"/>
        <dbReference type="ChEBI" id="CHEBI:30616"/>
        <dbReference type="ChEBI" id="CHEBI:58702"/>
        <dbReference type="ChEBI" id="CHEBI:456216"/>
        <dbReference type="EC" id="4.1.1.49"/>
    </reaction>
</comment>
<comment type="cofactor">
    <cofactor evidence="1">
        <name>Mn(2+)</name>
        <dbReference type="ChEBI" id="CHEBI:29035"/>
    </cofactor>
    <text evidence="1">Binds 1 Mn(2+) ion per subunit.</text>
</comment>
<comment type="pathway">
    <text evidence="1">Carbohydrate biosynthesis; gluconeogenesis.</text>
</comment>
<comment type="subunit">
    <text evidence="1">Monomer.</text>
</comment>
<comment type="subcellular location">
    <subcellularLocation>
        <location evidence="1">Cytoplasm</location>
    </subcellularLocation>
</comment>
<comment type="similarity">
    <text evidence="1">Belongs to the phosphoenolpyruvate carboxykinase (ATP) family.</text>
</comment>
<name>PCKA_COXBU</name>
<dbReference type="EC" id="4.1.1.49" evidence="1"/>
<dbReference type="EMBL" id="AE016828">
    <property type="protein sequence ID" value="AAO91576.1"/>
    <property type="molecule type" value="Genomic_DNA"/>
</dbReference>
<dbReference type="RefSeq" id="NP_821062.1">
    <property type="nucleotide sequence ID" value="NC_002971.4"/>
</dbReference>
<dbReference type="RefSeq" id="WP_010958647.1">
    <property type="nucleotide sequence ID" value="NC_002971.4"/>
</dbReference>
<dbReference type="SMR" id="Q83A19"/>
<dbReference type="STRING" id="227377.CBU_2092"/>
<dbReference type="DNASU" id="1210005"/>
<dbReference type="EnsemblBacteria" id="AAO91576">
    <property type="protein sequence ID" value="AAO91576"/>
    <property type="gene ID" value="CBU_2092"/>
</dbReference>
<dbReference type="GeneID" id="1210005"/>
<dbReference type="KEGG" id="cbu:CBU_2092"/>
<dbReference type="PATRIC" id="fig|227377.7.peg.2082"/>
<dbReference type="eggNOG" id="COG1866">
    <property type="taxonomic scope" value="Bacteria"/>
</dbReference>
<dbReference type="HOGENOM" id="CLU_018247_0_1_6"/>
<dbReference type="OrthoDB" id="9806325at2"/>
<dbReference type="UniPathway" id="UPA00138"/>
<dbReference type="Proteomes" id="UP000002671">
    <property type="component" value="Chromosome"/>
</dbReference>
<dbReference type="GO" id="GO:0005829">
    <property type="term" value="C:cytosol"/>
    <property type="evidence" value="ECO:0000318"/>
    <property type="project" value="GO_Central"/>
</dbReference>
<dbReference type="GO" id="GO:0005524">
    <property type="term" value="F:ATP binding"/>
    <property type="evidence" value="ECO:0007669"/>
    <property type="project" value="UniProtKB-UniRule"/>
</dbReference>
<dbReference type="GO" id="GO:0046872">
    <property type="term" value="F:metal ion binding"/>
    <property type="evidence" value="ECO:0007669"/>
    <property type="project" value="UniProtKB-KW"/>
</dbReference>
<dbReference type="GO" id="GO:0004612">
    <property type="term" value="F:phosphoenolpyruvate carboxykinase (ATP) activity"/>
    <property type="evidence" value="ECO:0000318"/>
    <property type="project" value="GO_Central"/>
</dbReference>
<dbReference type="GO" id="GO:0006094">
    <property type="term" value="P:gluconeogenesis"/>
    <property type="evidence" value="ECO:0000318"/>
    <property type="project" value="GO_Central"/>
</dbReference>
<dbReference type="CDD" id="cd00484">
    <property type="entry name" value="PEPCK_ATP"/>
    <property type="match status" value="1"/>
</dbReference>
<dbReference type="Gene3D" id="3.90.228.20">
    <property type="match status" value="1"/>
</dbReference>
<dbReference type="Gene3D" id="3.40.449.10">
    <property type="entry name" value="Phosphoenolpyruvate Carboxykinase, domain 1"/>
    <property type="match status" value="1"/>
</dbReference>
<dbReference type="Gene3D" id="2.170.8.10">
    <property type="entry name" value="Phosphoenolpyruvate Carboxykinase, domain 2"/>
    <property type="match status" value="1"/>
</dbReference>
<dbReference type="HAMAP" id="MF_00453">
    <property type="entry name" value="PEPCK_ATP"/>
    <property type="match status" value="1"/>
</dbReference>
<dbReference type="InterPro" id="IPR001272">
    <property type="entry name" value="PEP_carboxykinase_ATP"/>
</dbReference>
<dbReference type="InterPro" id="IPR013035">
    <property type="entry name" value="PEP_carboxykinase_C"/>
</dbReference>
<dbReference type="InterPro" id="IPR008210">
    <property type="entry name" value="PEP_carboxykinase_N"/>
</dbReference>
<dbReference type="InterPro" id="IPR015994">
    <property type="entry name" value="PEPCK_ATP_CS"/>
</dbReference>
<dbReference type="NCBIfam" id="TIGR00224">
    <property type="entry name" value="pckA"/>
    <property type="match status" value="1"/>
</dbReference>
<dbReference type="NCBIfam" id="NF006820">
    <property type="entry name" value="PRK09344.1-2"/>
    <property type="match status" value="1"/>
</dbReference>
<dbReference type="NCBIfam" id="NF006821">
    <property type="entry name" value="PRK09344.1-3"/>
    <property type="match status" value="1"/>
</dbReference>
<dbReference type="NCBIfam" id="NF006823">
    <property type="entry name" value="PRK09344.1-5"/>
    <property type="match status" value="1"/>
</dbReference>
<dbReference type="PANTHER" id="PTHR30031:SF0">
    <property type="entry name" value="PHOSPHOENOLPYRUVATE CARBOXYKINASE (ATP)"/>
    <property type="match status" value="1"/>
</dbReference>
<dbReference type="PANTHER" id="PTHR30031">
    <property type="entry name" value="PHOSPHOENOLPYRUVATE CARBOXYKINASE ATP"/>
    <property type="match status" value="1"/>
</dbReference>
<dbReference type="Pfam" id="PF01293">
    <property type="entry name" value="PEPCK_ATP"/>
    <property type="match status" value="1"/>
</dbReference>
<dbReference type="PIRSF" id="PIRSF006294">
    <property type="entry name" value="PEP_crbxkin"/>
    <property type="match status" value="1"/>
</dbReference>
<dbReference type="SUPFAM" id="SSF68923">
    <property type="entry name" value="PEP carboxykinase N-terminal domain"/>
    <property type="match status" value="1"/>
</dbReference>
<dbReference type="SUPFAM" id="SSF53795">
    <property type="entry name" value="PEP carboxykinase-like"/>
    <property type="match status" value="1"/>
</dbReference>
<dbReference type="PROSITE" id="PS00532">
    <property type="entry name" value="PEPCK_ATP"/>
    <property type="match status" value="1"/>
</dbReference>
<sequence>MEQIAARVTYINLSPDELIQHAVKNGEGVLSSTGALAVTTGKRTGRSPKDRFIVKDEQTADQVAWGNINQPVEQRTFDQLWERALRYLSERAVYISHLQVGADDNYFLPLKVVTEFAWHNLFACDLFIRPSGDHANGKPSWVILSAPGLKTDPERDGVNSDGAVMINLSQRRVLLVGMPYAGEMKKAMFSVLNYLLPPHDVLPMHCAANAGQSGDVALFFGLSGTGKTTLSADPHRFLIGDDEHGWSATSVFNFEGGCYAKCIDLSQEREPMIWNAIRHGAIMENVVLDENGVPDYADARLTQNSRAAYPREYIPLRVENNRGRPPDAVLFLTCDLDGVLPPVALLTKEQAAYYFLSGYTALVGSTEVGSVKGVTSTFSTCFGAPFFPRPPTVYAELLMKRIEATGCQVYLVNTGWTGGAYGEGGERFSIPTTRAIVNAVLSGKLKEGPTEVLSGFNLTIPKSALGVDDHLLNPRKTWEDVSAYDARAQRLIQKFRENFEKFKVLAAIREAGPSDVH</sequence>
<accession>Q83A19</accession>
<proteinExistence type="inferred from homology"/>
<reference key="1">
    <citation type="journal article" date="2003" name="Proc. Natl. Acad. Sci. U.S.A.">
        <title>Complete genome sequence of the Q-fever pathogen, Coxiella burnetii.</title>
        <authorList>
            <person name="Seshadri R."/>
            <person name="Paulsen I.T."/>
            <person name="Eisen J.A."/>
            <person name="Read T.D."/>
            <person name="Nelson K.E."/>
            <person name="Nelson W.C."/>
            <person name="Ward N.L."/>
            <person name="Tettelin H."/>
            <person name="Davidsen T.M."/>
            <person name="Beanan M.J."/>
            <person name="DeBoy R.T."/>
            <person name="Daugherty S.C."/>
            <person name="Brinkac L.M."/>
            <person name="Madupu R."/>
            <person name="Dodson R.J."/>
            <person name="Khouri H.M."/>
            <person name="Lee K.H."/>
            <person name="Carty H.A."/>
            <person name="Scanlan D."/>
            <person name="Heinzen R.A."/>
            <person name="Thompson H.A."/>
            <person name="Samuel J.E."/>
            <person name="Fraser C.M."/>
            <person name="Heidelberg J.F."/>
        </authorList>
    </citation>
    <scope>NUCLEOTIDE SEQUENCE [LARGE SCALE GENOMIC DNA]</scope>
    <source>
        <strain>RSA 493 / Nine Mile phase I</strain>
    </source>
</reference>